<feature type="chain" id="PRO_0000261355" description="Type II pantothenate kinase">
    <location>
        <begin position="1"/>
        <end position="265"/>
    </location>
</feature>
<feature type="active site" description="Proton acceptor" evidence="1">
    <location>
        <position position="70"/>
    </location>
</feature>
<feature type="binding site" evidence="1">
    <location>
        <begin position="6"/>
        <end position="13"/>
    </location>
    <ligand>
        <name>ATP</name>
        <dbReference type="ChEBI" id="CHEBI:30616"/>
    </ligand>
</feature>
<feature type="binding site" evidence="1">
    <location>
        <position position="99"/>
    </location>
    <ligand>
        <name>ATP</name>
        <dbReference type="ChEBI" id="CHEBI:30616"/>
    </ligand>
</feature>
<feature type="binding site" evidence="1">
    <location>
        <begin position="121"/>
        <end position="125"/>
    </location>
    <ligand>
        <name>ATP</name>
        <dbReference type="ChEBI" id="CHEBI:30616"/>
    </ligand>
</feature>
<feature type="binding site" evidence="1">
    <location>
        <position position="137"/>
    </location>
    <ligand>
        <name>ATP</name>
        <dbReference type="ChEBI" id="CHEBI:30616"/>
    </ligand>
</feature>
<feature type="binding site" evidence="1">
    <location>
        <position position="225"/>
    </location>
    <ligand>
        <name>ATP</name>
        <dbReference type="ChEBI" id="CHEBI:30616"/>
    </ligand>
</feature>
<sequence length="265" mass="28838">MKIGVDAGGTLIKIVQEKNGERTYSTRLTTEIEEVIQWLNQQDCNNINLTGGQAAMINEQLNCESRVFVEFDAAAKGLEILLEEQGHFLDDYIFTNVGTGTSLHFSNGKAQKRVGGIGTGGGMIQGLGYLLTGISNYKQLTDTAQNGNRDIIDLKVKHIYKDSEPPISGDLTAANFGNVLHHLDESFTDADKLASVIAVVGEVITTMSITVAREHNTKNVAYIGSSFHNNDLLKDVVKDYTVLRGCEPYYIEHGAFSGALGSIHL</sequence>
<organism>
    <name type="scientific">Staphylococcus saprophyticus subsp. saprophyticus (strain ATCC 15305 / DSM 20229 / NCIMB 8711 / NCTC 7292 / S-41)</name>
    <dbReference type="NCBI Taxonomy" id="342451"/>
    <lineage>
        <taxon>Bacteria</taxon>
        <taxon>Bacillati</taxon>
        <taxon>Bacillota</taxon>
        <taxon>Bacilli</taxon>
        <taxon>Bacillales</taxon>
        <taxon>Staphylococcaceae</taxon>
        <taxon>Staphylococcus</taxon>
    </lineage>
</organism>
<comment type="function">
    <text evidence="1">Catalyzes the phosphorylation of pantothenate (Pan), the first step in CoA biosynthesis.</text>
</comment>
<comment type="catalytic activity">
    <reaction evidence="1">
        <text>(R)-pantothenate + ATP = (R)-4'-phosphopantothenate + ADP + H(+)</text>
        <dbReference type="Rhea" id="RHEA:16373"/>
        <dbReference type="ChEBI" id="CHEBI:10986"/>
        <dbReference type="ChEBI" id="CHEBI:15378"/>
        <dbReference type="ChEBI" id="CHEBI:29032"/>
        <dbReference type="ChEBI" id="CHEBI:30616"/>
        <dbReference type="ChEBI" id="CHEBI:456216"/>
        <dbReference type="EC" id="2.7.1.33"/>
    </reaction>
</comment>
<comment type="pathway">
    <text evidence="1">Cofactor biosynthesis; coenzyme A biosynthesis; CoA from (R)-pantothenate: step 1/5.</text>
</comment>
<comment type="subunit">
    <text evidence="1">Homodimer.</text>
</comment>
<comment type="subcellular location">
    <subcellularLocation>
        <location evidence="1">Cytoplasm</location>
    </subcellularLocation>
</comment>
<comment type="similarity">
    <text evidence="1">Belongs to the type II pantothenate kinase family.</text>
</comment>
<keyword id="KW-0067">ATP-binding</keyword>
<keyword id="KW-0173">Coenzyme A biosynthesis</keyword>
<keyword id="KW-0963">Cytoplasm</keyword>
<keyword id="KW-0418">Kinase</keyword>
<keyword id="KW-0547">Nucleotide-binding</keyword>
<keyword id="KW-1185">Reference proteome</keyword>
<keyword id="KW-0808">Transferase</keyword>
<proteinExistence type="inferred from homology"/>
<dbReference type="EC" id="2.7.1.33" evidence="1"/>
<dbReference type="EMBL" id="AP008934">
    <property type="protein sequence ID" value="BAE17900.1"/>
    <property type="molecule type" value="Genomic_DNA"/>
</dbReference>
<dbReference type="RefSeq" id="WP_011302660.1">
    <property type="nucleotide sequence ID" value="NZ_MTGA01000032.1"/>
</dbReference>
<dbReference type="SMR" id="Q49Z76"/>
<dbReference type="DNASU" id="3615820"/>
<dbReference type="GeneID" id="3615820"/>
<dbReference type="KEGG" id="ssp:SSP0755"/>
<dbReference type="PATRIC" id="fig|342451.11.peg.757"/>
<dbReference type="eggNOG" id="COG5146">
    <property type="taxonomic scope" value="Bacteria"/>
</dbReference>
<dbReference type="HOGENOM" id="CLU_087521_1_0_9"/>
<dbReference type="OrthoDB" id="358216at2"/>
<dbReference type="UniPathway" id="UPA00241">
    <property type="reaction ID" value="UER00352"/>
</dbReference>
<dbReference type="Proteomes" id="UP000006371">
    <property type="component" value="Chromosome"/>
</dbReference>
<dbReference type="GO" id="GO:0005829">
    <property type="term" value="C:cytosol"/>
    <property type="evidence" value="ECO:0007669"/>
    <property type="project" value="TreeGrafter"/>
</dbReference>
<dbReference type="GO" id="GO:0005524">
    <property type="term" value="F:ATP binding"/>
    <property type="evidence" value="ECO:0007669"/>
    <property type="project" value="UniProtKB-UniRule"/>
</dbReference>
<dbReference type="GO" id="GO:0004594">
    <property type="term" value="F:pantothenate kinase activity"/>
    <property type="evidence" value="ECO:0007669"/>
    <property type="project" value="UniProtKB-UniRule"/>
</dbReference>
<dbReference type="GO" id="GO:0015937">
    <property type="term" value="P:coenzyme A biosynthetic process"/>
    <property type="evidence" value="ECO:0007669"/>
    <property type="project" value="UniProtKB-UniRule"/>
</dbReference>
<dbReference type="Gene3D" id="3.30.420.40">
    <property type="match status" value="1"/>
</dbReference>
<dbReference type="HAMAP" id="MF_01273">
    <property type="entry name" value="Pantothen_kinase_2"/>
    <property type="match status" value="1"/>
</dbReference>
<dbReference type="InterPro" id="IPR043129">
    <property type="entry name" value="ATPase_NBD"/>
</dbReference>
<dbReference type="InterPro" id="IPR004567">
    <property type="entry name" value="Type_II_PanK"/>
</dbReference>
<dbReference type="InterPro" id="IPR011602">
    <property type="entry name" value="Type_II_PanK_bac"/>
</dbReference>
<dbReference type="NCBIfam" id="TIGR00555">
    <property type="entry name" value="panK_eukar"/>
    <property type="match status" value="1"/>
</dbReference>
<dbReference type="NCBIfam" id="NF009842">
    <property type="entry name" value="PRK13317.1"/>
    <property type="match status" value="1"/>
</dbReference>
<dbReference type="PANTHER" id="PTHR12280:SF20">
    <property type="entry name" value="4'-PHOSPHOPANTETHEINE PHOSPHATASE"/>
    <property type="match status" value="1"/>
</dbReference>
<dbReference type="PANTHER" id="PTHR12280">
    <property type="entry name" value="PANTOTHENATE KINASE"/>
    <property type="match status" value="1"/>
</dbReference>
<dbReference type="Pfam" id="PF03630">
    <property type="entry name" value="Fumble"/>
    <property type="match status" value="1"/>
</dbReference>
<dbReference type="PIRSF" id="PIRSF036940">
    <property type="entry name" value="PanK_bac_aCoA"/>
    <property type="match status" value="1"/>
</dbReference>
<dbReference type="SUPFAM" id="SSF53067">
    <property type="entry name" value="Actin-like ATPase domain"/>
    <property type="match status" value="1"/>
</dbReference>
<evidence type="ECO:0000255" key="1">
    <source>
        <dbReference type="HAMAP-Rule" id="MF_01273"/>
    </source>
</evidence>
<accession>Q49Z76</accession>
<protein>
    <recommendedName>
        <fullName evidence="1">Type II pantothenate kinase</fullName>
        <ecNumber evidence="1">2.7.1.33</ecNumber>
    </recommendedName>
    <alternativeName>
        <fullName evidence="1">PanK-II</fullName>
    </alternativeName>
    <alternativeName>
        <fullName evidence="1">Pantothenic acid kinase</fullName>
    </alternativeName>
</protein>
<gene>
    <name evidence="1" type="primary">coaW</name>
    <name type="ordered locus">SSP0755</name>
</gene>
<reference key="1">
    <citation type="journal article" date="2005" name="Proc. Natl. Acad. Sci. U.S.A.">
        <title>Whole genome sequence of Staphylococcus saprophyticus reveals the pathogenesis of uncomplicated urinary tract infection.</title>
        <authorList>
            <person name="Kuroda M."/>
            <person name="Yamashita A."/>
            <person name="Hirakawa H."/>
            <person name="Kumano M."/>
            <person name="Morikawa K."/>
            <person name="Higashide M."/>
            <person name="Maruyama A."/>
            <person name="Inose Y."/>
            <person name="Matoba K."/>
            <person name="Toh H."/>
            <person name="Kuhara S."/>
            <person name="Hattori M."/>
            <person name="Ohta T."/>
        </authorList>
    </citation>
    <scope>NUCLEOTIDE SEQUENCE [LARGE SCALE GENOMIC DNA]</scope>
    <source>
        <strain>ATCC 15305 / DSM 20229 / NCIMB 8711 / NCTC 7292 / S-41</strain>
    </source>
</reference>
<name>COAW_STAS1</name>